<dbReference type="EC" id="2.1.1.-"/>
<dbReference type="EMBL" id="AL935263">
    <property type="protein sequence ID" value="CCC80247.1"/>
    <property type="molecule type" value="Genomic_DNA"/>
</dbReference>
<dbReference type="RefSeq" id="YP_004890761.1">
    <property type="nucleotide sequence ID" value="NC_004567.2"/>
</dbReference>
<dbReference type="SMR" id="Q88SY9"/>
<dbReference type="STRING" id="220668.lp_3226"/>
<dbReference type="EnsemblBacteria" id="CCC80247">
    <property type="protein sequence ID" value="CCC80247"/>
    <property type="gene ID" value="lp_3226"/>
</dbReference>
<dbReference type="KEGG" id="lpl:lp_3226"/>
<dbReference type="PATRIC" id="fig|220668.9.peg.2695"/>
<dbReference type="eggNOG" id="COG2265">
    <property type="taxonomic scope" value="Bacteria"/>
</dbReference>
<dbReference type="HOGENOM" id="CLU_014689_7_1_9"/>
<dbReference type="OrthoDB" id="9804590at2"/>
<dbReference type="PhylomeDB" id="Q88SY9"/>
<dbReference type="Proteomes" id="UP000000432">
    <property type="component" value="Chromosome"/>
</dbReference>
<dbReference type="GO" id="GO:0070041">
    <property type="term" value="F:rRNA (uridine-C5-)-methyltransferase activity"/>
    <property type="evidence" value="ECO:0007669"/>
    <property type="project" value="TreeGrafter"/>
</dbReference>
<dbReference type="GO" id="GO:0070475">
    <property type="term" value="P:rRNA base methylation"/>
    <property type="evidence" value="ECO:0007669"/>
    <property type="project" value="TreeGrafter"/>
</dbReference>
<dbReference type="FunFam" id="3.40.50.150:FF:000009">
    <property type="entry name" value="23S rRNA (Uracil(1939)-C(5))-methyltransferase RlmD"/>
    <property type="match status" value="1"/>
</dbReference>
<dbReference type="FunFam" id="2.40.50.1070:FF:000003">
    <property type="entry name" value="23S rRNA (Uracil-5-)-methyltransferase RumA"/>
    <property type="match status" value="1"/>
</dbReference>
<dbReference type="Gene3D" id="2.40.50.1070">
    <property type="match status" value="1"/>
</dbReference>
<dbReference type="Gene3D" id="2.40.50.140">
    <property type="entry name" value="Nucleic acid-binding proteins"/>
    <property type="match status" value="1"/>
</dbReference>
<dbReference type="Gene3D" id="3.40.50.150">
    <property type="entry name" value="Vaccinia Virus protein VP39"/>
    <property type="match status" value="1"/>
</dbReference>
<dbReference type="InterPro" id="IPR030390">
    <property type="entry name" value="MeTrfase_TrmA_AS"/>
</dbReference>
<dbReference type="InterPro" id="IPR012340">
    <property type="entry name" value="NA-bd_OB-fold"/>
</dbReference>
<dbReference type="InterPro" id="IPR029063">
    <property type="entry name" value="SAM-dependent_MTases_sf"/>
</dbReference>
<dbReference type="InterPro" id="IPR002792">
    <property type="entry name" value="TRAM_dom"/>
</dbReference>
<dbReference type="InterPro" id="IPR010280">
    <property type="entry name" value="U5_MeTrfase_fam"/>
</dbReference>
<dbReference type="NCBIfam" id="TIGR00479">
    <property type="entry name" value="rumA"/>
    <property type="match status" value="1"/>
</dbReference>
<dbReference type="PANTHER" id="PTHR11061:SF45">
    <property type="match status" value="1"/>
</dbReference>
<dbReference type="PANTHER" id="PTHR11061">
    <property type="entry name" value="RNA M5U METHYLTRANSFERASE"/>
    <property type="match status" value="1"/>
</dbReference>
<dbReference type="Pfam" id="PF01938">
    <property type="entry name" value="TRAM"/>
    <property type="match status" value="1"/>
</dbReference>
<dbReference type="Pfam" id="PF05958">
    <property type="entry name" value="tRNA_U5-meth_tr"/>
    <property type="match status" value="1"/>
</dbReference>
<dbReference type="SUPFAM" id="SSF50249">
    <property type="entry name" value="Nucleic acid-binding proteins"/>
    <property type="match status" value="1"/>
</dbReference>
<dbReference type="SUPFAM" id="SSF53335">
    <property type="entry name" value="S-adenosyl-L-methionine-dependent methyltransferases"/>
    <property type="match status" value="1"/>
</dbReference>
<dbReference type="PROSITE" id="PS51687">
    <property type="entry name" value="SAM_MT_RNA_M5U"/>
    <property type="match status" value="1"/>
</dbReference>
<dbReference type="PROSITE" id="PS50926">
    <property type="entry name" value="TRAM"/>
    <property type="match status" value="1"/>
</dbReference>
<dbReference type="PROSITE" id="PS01230">
    <property type="entry name" value="TRMA_1"/>
    <property type="match status" value="1"/>
</dbReference>
<feature type="chain" id="PRO_0000161990" description="Uncharacterized RNA methyltransferase lp_3226">
    <location>
        <begin position="1"/>
        <end position="481"/>
    </location>
</feature>
<feature type="domain" description="TRAM" evidence="1">
    <location>
        <begin position="29"/>
        <end position="87"/>
    </location>
</feature>
<feature type="region of interest" description="Disordered" evidence="3">
    <location>
        <begin position="1"/>
        <end position="28"/>
    </location>
</feature>
<feature type="active site" description="Nucleophile" evidence="2">
    <location>
        <position position="438"/>
    </location>
</feature>
<feature type="binding site" evidence="2">
    <location>
        <position position="313"/>
    </location>
    <ligand>
        <name>S-adenosyl-L-methionine</name>
        <dbReference type="ChEBI" id="CHEBI:59789"/>
    </ligand>
</feature>
<feature type="binding site" evidence="2">
    <location>
        <position position="342"/>
    </location>
    <ligand>
        <name>S-adenosyl-L-methionine</name>
        <dbReference type="ChEBI" id="CHEBI:59789"/>
    </ligand>
</feature>
<feature type="binding site" evidence="2">
    <location>
        <position position="363"/>
    </location>
    <ligand>
        <name>S-adenosyl-L-methionine</name>
        <dbReference type="ChEBI" id="CHEBI:59789"/>
    </ligand>
</feature>
<feature type="binding site" evidence="2">
    <location>
        <position position="411"/>
    </location>
    <ligand>
        <name>S-adenosyl-L-methionine</name>
        <dbReference type="ChEBI" id="CHEBI:59789"/>
    </ligand>
</feature>
<proteinExistence type="inferred from homology"/>
<reference key="1">
    <citation type="journal article" date="2003" name="Proc. Natl. Acad. Sci. U.S.A.">
        <title>Complete genome sequence of Lactobacillus plantarum WCFS1.</title>
        <authorList>
            <person name="Kleerebezem M."/>
            <person name="Boekhorst J."/>
            <person name="van Kranenburg R."/>
            <person name="Molenaar D."/>
            <person name="Kuipers O.P."/>
            <person name="Leer R."/>
            <person name="Tarchini R."/>
            <person name="Peters S.A."/>
            <person name="Sandbrink H.M."/>
            <person name="Fiers M.W.E.J."/>
            <person name="Stiekema W."/>
            <person name="Klein Lankhorst R.M."/>
            <person name="Bron P.A."/>
            <person name="Hoffer S.M."/>
            <person name="Nierop Groot M.N."/>
            <person name="Kerkhoven R."/>
            <person name="De Vries M."/>
            <person name="Ursing B."/>
            <person name="De Vos W.M."/>
            <person name="Siezen R.J."/>
        </authorList>
    </citation>
    <scope>NUCLEOTIDE SEQUENCE [LARGE SCALE GENOMIC DNA]</scope>
    <source>
        <strain>ATCC BAA-793 / NCIMB 8826 / WCFS1</strain>
    </source>
</reference>
<reference key="2">
    <citation type="journal article" date="2012" name="J. Bacteriol.">
        <title>Complete resequencing and reannotation of the Lactobacillus plantarum WCFS1 genome.</title>
        <authorList>
            <person name="Siezen R.J."/>
            <person name="Francke C."/>
            <person name="Renckens B."/>
            <person name="Boekhorst J."/>
            <person name="Wels M."/>
            <person name="Kleerebezem M."/>
            <person name="van Hijum S.A."/>
        </authorList>
    </citation>
    <scope>NUCLEOTIDE SEQUENCE [LARGE SCALE GENOMIC DNA]</scope>
    <scope>GENOME REANNOTATION</scope>
    <source>
        <strain>ATCC BAA-793 / NCIMB 8826 / WCFS1</strain>
    </source>
</reference>
<name>Y3226_LACPL</name>
<comment type="similarity">
    <text evidence="2">Belongs to the class I-like SAM-binding methyltransferase superfamily. RNA M5U methyltransferase family.</text>
</comment>
<protein>
    <recommendedName>
        <fullName>Uncharacterized RNA methyltransferase lp_3226</fullName>
        <ecNumber>2.1.1.-</ecNumber>
    </recommendedName>
</protein>
<keyword id="KW-0489">Methyltransferase</keyword>
<keyword id="KW-1185">Reference proteome</keyword>
<keyword id="KW-0949">S-adenosyl-L-methionine</keyword>
<keyword id="KW-0808">Transferase</keyword>
<sequence>MPQSNHYSHQSRSHNDRRRQQPDEKVQATVNIGQRFPLTIRRLGINGEGIGYYKHVITFVKGALPEEVVVAEVTAVHPRYLEAKIRSIRKPSPDRVDPRDAYAGEVGGFELEHLDYPAQLAFKQDLIRQALEKYRPAGYRHYDVRPTIGMTNPYEYRNKAQFQVRLIDGHVAAGLYKENSHDLVDLPTCSVQMPATMTVMRQVVAWLEELQVPIYDEEHNSGIVKTIVVREAAATGEIQLVFITNTPKLPKKHQLLMKIAEKLPMVVSVMQNINAGKTSLIWGDQTTLLAGKPTITEELDGLVFDLSARAFFQLNPQQTKKLYRLAREALNLAPNETLVDAYSGVGTIGLSLADVAKEVRGMDTIPAAVADANANAQRNQITNAHYEVGEAEVLLPQWLASGFAPDAMVVDPPRTGLDNVLIDAILQSAPEKLVYISCNPSTLAQDLQALTRGYQVDYIQSIDMFPQTARCEAVVRFTKRH</sequence>
<organism>
    <name type="scientific">Lactiplantibacillus plantarum (strain ATCC BAA-793 / NCIMB 8826 / WCFS1)</name>
    <name type="common">Lactobacillus plantarum</name>
    <dbReference type="NCBI Taxonomy" id="220668"/>
    <lineage>
        <taxon>Bacteria</taxon>
        <taxon>Bacillati</taxon>
        <taxon>Bacillota</taxon>
        <taxon>Bacilli</taxon>
        <taxon>Lactobacillales</taxon>
        <taxon>Lactobacillaceae</taxon>
        <taxon>Lactiplantibacillus</taxon>
    </lineage>
</organism>
<evidence type="ECO:0000255" key="1">
    <source>
        <dbReference type="PROSITE-ProRule" id="PRU00208"/>
    </source>
</evidence>
<evidence type="ECO:0000255" key="2">
    <source>
        <dbReference type="PROSITE-ProRule" id="PRU01024"/>
    </source>
</evidence>
<evidence type="ECO:0000256" key="3">
    <source>
        <dbReference type="SAM" id="MobiDB-lite"/>
    </source>
</evidence>
<gene>
    <name type="ordered locus">lp_3226</name>
</gene>
<accession>Q88SY9</accession>
<accession>F9UTC9</accession>